<gene>
    <name evidence="1" type="primary">fabZ</name>
    <name type="ordered locus">Maqu_2537</name>
</gene>
<name>FABZ_MARN8</name>
<feature type="chain" id="PRO_0000301903" description="3-hydroxyacyl-[acyl-carrier-protein] dehydratase FabZ">
    <location>
        <begin position="1"/>
        <end position="145"/>
    </location>
</feature>
<feature type="active site" evidence="1">
    <location>
        <position position="48"/>
    </location>
</feature>
<keyword id="KW-0963">Cytoplasm</keyword>
<keyword id="KW-0441">Lipid A biosynthesis</keyword>
<keyword id="KW-0444">Lipid biosynthesis</keyword>
<keyword id="KW-0443">Lipid metabolism</keyword>
<keyword id="KW-0456">Lyase</keyword>
<protein>
    <recommendedName>
        <fullName evidence="1">3-hydroxyacyl-[acyl-carrier-protein] dehydratase FabZ</fullName>
        <ecNumber evidence="1">4.2.1.59</ecNumber>
    </recommendedName>
    <alternativeName>
        <fullName evidence="1">(3R)-hydroxymyristoyl-[acyl-carrier-protein] dehydratase</fullName>
        <shortName evidence="1">(3R)-hydroxymyristoyl-ACP dehydrase</shortName>
    </alternativeName>
    <alternativeName>
        <fullName evidence="1">Beta-hydroxyacyl-ACP dehydratase</fullName>
    </alternativeName>
</protein>
<sequence>MMHIDEILEYLPHRYPFLLVDRVTEVEKGKSIKGYKNVSFNEPFFTGHFPDNPIMPGVLIIEAMAQLSGILGFVTVERKPSDGVVQYLAGSSKARFKRPVLPGDRLDMESEFISGKRGIWKFDCRALVDGEVVCVAEILTAEREV</sequence>
<reference key="1">
    <citation type="journal article" date="2011" name="Appl. Environ. Microbiol.">
        <title>Genomic potential of Marinobacter aquaeolei, a biogeochemical 'opportunitroph'.</title>
        <authorList>
            <person name="Singer E."/>
            <person name="Webb E.A."/>
            <person name="Nelson W.C."/>
            <person name="Heidelberg J.F."/>
            <person name="Ivanova N."/>
            <person name="Pati A."/>
            <person name="Edwards K.J."/>
        </authorList>
    </citation>
    <scope>NUCLEOTIDE SEQUENCE [LARGE SCALE GENOMIC DNA]</scope>
    <source>
        <strain>ATCC 700491 / DSM 11845 / VT8</strain>
    </source>
</reference>
<comment type="function">
    <text evidence="1">Involved in unsaturated fatty acids biosynthesis. Catalyzes the dehydration of short chain beta-hydroxyacyl-ACPs and long chain saturated and unsaturated beta-hydroxyacyl-ACPs.</text>
</comment>
<comment type="catalytic activity">
    <reaction evidence="1">
        <text>a (3R)-hydroxyacyl-[ACP] = a (2E)-enoyl-[ACP] + H2O</text>
        <dbReference type="Rhea" id="RHEA:13097"/>
        <dbReference type="Rhea" id="RHEA-COMP:9925"/>
        <dbReference type="Rhea" id="RHEA-COMP:9945"/>
        <dbReference type="ChEBI" id="CHEBI:15377"/>
        <dbReference type="ChEBI" id="CHEBI:78784"/>
        <dbReference type="ChEBI" id="CHEBI:78827"/>
        <dbReference type="EC" id="4.2.1.59"/>
    </reaction>
</comment>
<comment type="subcellular location">
    <subcellularLocation>
        <location evidence="1">Cytoplasm</location>
    </subcellularLocation>
</comment>
<comment type="similarity">
    <text evidence="1">Belongs to the thioester dehydratase family. FabZ subfamily.</text>
</comment>
<organism>
    <name type="scientific">Marinobacter nauticus (strain ATCC 700491 / DSM 11845 / VT8)</name>
    <name type="common">Marinobacter aquaeolei</name>
    <dbReference type="NCBI Taxonomy" id="351348"/>
    <lineage>
        <taxon>Bacteria</taxon>
        <taxon>Pseudomonadati</taxon>
        <taxon>Pseudomonadota</taxon>
        <taxon>Gammaproteobacteria</taxon>
        <taxon>Pseudomonadales</taxon>
        <taxon>Marinobacteraceae</taxon>
        <taxon>Marinobacter</taxon>
    </lineage>
</organism>
<proteinExistence type="inferred from homology"/>
<accession>A1U3P3</accession>
<evidence type="ECO:0000255" key="1">
    <source>
        <dbReference type="HAMAP-Rule" id="MF_00406"/>
    </source>
</evidence>
<dbReference type="EC" id="4.2.1.59" evidence="1"/>
<dbReference type="EMBL" id="CP000514">
    <property type="protein sequence ID" value="ABM19612.1"/>
    <property type="molecule type" value="Genomic_DNA"/>
</dbReference>
<dbReference type="RefSeq" id="WP_011785996.1">
    <property type="nucleotide sequence ID" value="NC_008740.1"/>
</dbReference>
<dbReference type="SMR" id="A1U3P3"/>
<dbReference type="STRING" id="351348.Maqu_2537"/>
<dbReference type="GeneID" id="31821861"/>
<dbReference type="KEGG" id="maq:Maqu_2537"/>
<dbReference type="eggNOG" id="COG0764">
    <property type="taxonomic scope" value="Bacteria"/>
</dbReference>
<dbReference type="HOGENOM" id="CLU_078912_1_0_6"/>
<dbReference type="OrthoDB" id="9772788at2"/>
<dbReference type="Proteomes" id="UP000000998">
    <property type="component" value="Chromosome"/>
</dbReference>
<dbReference type="GO" id="GO:0005737">
    <property type="term" value="C:cytoplasm"/>
    <property type="evidence" value="ECO:0007669"/>
    <property type="project" value="UniProtKB-SubCell"/>
</dbReference>
<dbReference type="GO" id="GO:0016020">
    <property type="term" value="C:membrane"/>
    <property type="evidence" value="ECO:0007669"/>
    <property type="project" value="GOC"/>
</dbReference>
<dbReference type="GO" id="GO:0019171">
    <property type="term" value="F:(3R)-hydroxyacyl-[acyl-carrier-protein] dehydratase activity"/>
    <property type="evidence" value="ECO:0007669"/>
    <property type="project" value="UniProtKB-EC"/>
</dbReference>
<dbReference type="GO" id="GO:0006633">
    <property type="term" value="P:fatty acid biosynthetic process"/>
    <property type="evidence" value="ECO:0007669"/>
    <property type="project" value="UniProtKB-UniRule"/>
</dbReference>
<dbReference type="GO" id="GO:0009245">
    <property type="term" value="P:lipid A biosynthetic process"/>
    <property type="evidence" value="ECO:0007669"/>
    <property type="project" value="UniProtKB-UniRule"/>
</dbReference>
<dbReference type="CDD" id="cd01288">
    <property type="entry name" value="FabZ"/>
    <property type="match status" value="1"/>
</dbReference>
<dbReference type="FunFam" id="3.10.129.10:FF:000001">
    <property type="entry name" value="3-hydroxyacyl-[acyl-carrier-protein] dehydratase FabZ"/>
    <property type="match status" value="1"/>
</dbReference>
<dbReference type="Gene3D" id="3.10.129.10">
    <property type="entry name" value="Hotdog Thioesterase"/>
    <property type="match status" value="1"/>
</dbReference>
<dbReference type="HAMAP" id="MF_00406">
    <property type="entry name" value="FabZ"/>
    <property type="match status" value="1"/>
</dbReference>
<dbReference type="InterPro" id="IPR013114">
    <property type="entry name" value="FabA_FabZ"/>
</dbReference>
<dbReference type="InterPro" id="IPR010084">
    <property type="entry name" value="FabZ"/>
</dbReference>
<dbReference type="InterPro" id="IPR029069">
    <property type="entry name" value="HotDog_dom_sf"/>
</dbReference>
<dbReference type="NCBIfam" id="TIGR01750">
    <property type="entry name" value="fabZ"/>
    <property type="match status" value="1"/>
</dbReference>
<dbReference type="NCBIfam" id="NF000582">
    <property type="entry name" value="PRK00006.1"/>
    <property type="match status" value="1"/>
</dbReference>
<dbReference type="PANTHER" id="PTHR30272">
    <property type="entry name" value="3-HYDROXYACYL-[ACYL-CARRIER-PROTEIN] DEHYDRATASE"/>
    <property type="match status" value="1"/>
</dbReference>
<dbReference type="PANTHER" id="PTHR30272:SF1">
    <property type="entry name" value="3-HYDROXYACYL-[ACYL-CARRIER-PROTEIN] DEHYDRATASE"/>
    <property type="match status" value="1"/>
</dbReference>
<dbReference type="Pfam" id="PF07977">
    <property type="entry name" value="FabA"/>
    <property type="match status" value="1"/>
</dbReference>
<dbReference type="SUPFAM" id="SSF54637">
    <property type="entry name" value="Thioesterase/thiol ester dehydrase-isomerase"/>
    <property type="match status" value="1"/>
</dbReference>